<keyword id="KW-0963">Cytoplasm</keyword>
<keyword id="KW-0255">Endonuclease</keyword>
<keyword id="KW-0378">Hydrolase</keyword>
<keyword id="KW-0479">Metal-binding</keyword>
<keyword id="KW-0540">Nuclease</keyword>
<keyword id="KW-1185">Reference proteome</keyword>
<keyword id="KW-0690">Ribosome biogenesis</keyword>
<keyword id="KW-0698">rRNA processing</keyword>
<keyword id="KW-0862">Zinc</keyword>
<gene>
    <name evidence="1" type="primary">ybeY</name>
    <name type="ordered locus">Aasi_0282</name>
</gene>
<dbReference type="EC" id="3.1.-.-" evidence="1"/>
<dbReference type="EMBL" id="CP001102">
    <property type="protein sequence ID" value="ACE05720.1"/>
    <property type="molecule type" value="Genomic_DNA"/>
</dbReference>
<dbReference type="RefSeq" id="WP_012472483.1">
    <property type="nucleotide sequence ID" value="NC_010830.1"/>
</dbReference>
<dbReference type="SMR" id="B3ER68"/>
<dbReference type="STRING" id="452471.Aasi_0282"/>
<dbReference type="KEGG" id="aas:Aasi_0282"/>
<dbReference type="eggNOG" id="COG0319">
    <property type="taxonomic scope" value="Bacteria"/>
</dbReference>
<dbReference type="HOGENOM" id="CLU_106710_3_3_10"/>
<dbReference type="OrthoDB" id="9811984at2"/>
<dbReference type="Proteomes" id="UP000001227">
    <property type="component" value="Chromosome"/>
</dbReference>
<dbReference type="GO" id="GO:0005737">
    <property type="term" value="C:cytoplasm"/>
    <property type="evidence" value="ECO:0007669"/>
    <property type="project" value="UniProtKB-SubCell"/>
</dbReference>
<dbReference type="GO" id="GO:0004222">
    <property type="term" value="F:metalloendopeptidase activity"/>
    <property type="evidence" value="ECO:0007669"/>
    <property type="project" value="InterPro"/>
</dbReference>
<dbReference type="GO" id="GO:0004521">
    <property type="term" value="F:RNA endonuclease activity"/>
    <property type="evidence" value="ECO:0007669"/>
    <property type="project" value="UniProtKB-UniRule"/>
</dbReference>
<dbReference type="GO" id="GO:0008270">
    <property type="term" value="F:zinc ion binding"/>
    <property type="evidence" value="ECO:0007669"/>
    <property type="project" value="UniProtKB-UniRule"/>
</dbReference>
<dbReference type="GO" id="GO:0006364">
    <property type="term" value="P:rRNA processing"/>
    <property type="evidence" value="ECO:0007669"/>
    <property type="project" value="UniProtKB-UniRule"/>
</dbReference>
<dbReference type="Gene3D" id="3.40.390.30">
    <property type="entry name" value="Metalloproteases ('zincins'), catalytic domain"/>
    <property type="match status" value="1"/>
</dbReference>
<dbReference type="HAMAP" id="MF_00009">
    <property type="entry name" value="Endoribonucl_YbeY"/>
    <property type="match status" value="1"/>
</dbReference>
<dbReference type="InterPro" id="IPR023091">
    <property type="entry name" value="MetalPrtase_cat_dom_sf_prd"/>
</dbReference>
<dbReference type="InterPro" id="IPR002036">
    <property type="entry name" value="YbeY"/>
</dbReference>
<dbReference type="InterPro" id="IPR020549">
    <property type="entry name" value="YbeY_CS"/>
</dbReference>
<dbReference type="NCBIfam" id="TIGR00043">
    <property type="entry name" value="rRNA maturation RNase YbeY"/>
    <property type="match status" value="1"/>
</dbReference>
<dbReference type="PANTHER" id="PTHR46986">
    <property type="entry name" value="ENDORIBONUCLEASE YBEY, CHLOROPLASTIC"/>
    <property type="match status" value="1"/>
</dbReference>
<dbReference type="PANTHER" id="PTHR46986:SF1">
    <property type="entry name" value="ENDORIBONUCLEASE YBEY, CHLOROPLASTIC"/>
    <property type="match status" value="1"/>
</dbReference>
<dbReference type="Pfam" id="PF02130">
    <property type="entry name" value="YbeY"/>
    <property type="match status" value="1"/>
</dbReference>
<dbReference type="SUPFAM" id="SSF55486">
    <property type="entry name" value="Metalloproteases ('zincins'), catalytic domain"/>
    <property type="match status" value="1"/>
</dbReference>
<dbReference type="PROSITE" id="PS01306">
    <property type="entry name" value="UPF0054"/>
    <property type="match status" value="1"/>
</dbReference>
<organism>
    <name type="scientific">Amoebophilus asiaticus (strain 5a2)</name>
    <dbReference type="NCBI Taxonomy" id="452471"/>
    <lineage>
        <taxon>Bacteria</taxon>
        <taxon>Pseudomonadati</taxon>
        <taxon>Bacteroidota</taxon>
        <taxon>Cytophagia</taxon>
        <taxon>Cytophagales</taxon>
        <taxon>Amoebophilaceae</taxon>
        <taxon>Candidatus Amoebophilus</taxon>
    </lineage>
</organism>
<comment type="function">
    <text evidence="1">Single strand-specific metallo-endoribonuclease involved in late-stage 70S ribosome quality control and in maturation of the 3' terminus of the 16S rRNA.</text>
</comment>
<comment type="cofactor">
    <cofactor evidence="1">
        <name>Zn(2+)</name>
        <dbReference type="ChEBI" id="CHEBI:29105"/>
    </cofactor>
    <text evidence="1">Binds 1 zinc ion.</text>
</comment>
<comment type="subcellular location">
    <subcellularLocation>
        <location evidence="1">Cytoplasm</location>
    </subcellularLocation>
</comment>
<comment type="similarity">
    <text evidence="1">Belongs to the endoribonuclease YbeY family.</text>
</comment>
<evidence type="ECO:0000255" key="1">
    <source>
        <dbReference type="HAMAP-Rule" id="MF_00009"/>
    </source>
</evidence>
<reference key="1">
    <citation type="journal article" date="2010" name="J. Bacteriol.">
        <title>The genome of the amoeba symbiont 'Candidatus Amoebophilus asiaticus' reveals common mechanisms for host cell interaction among amoeba-associated bacteria.</title>
        <authorList>
            <person name="Schmitz-Esser S."/>
            <person name="Tischler P."/>
            <person name="Arnold R."/>
            <person name="Montanaro J."/>
            <person name="Wagner M."/>
            <person name="Rattei T."/>
            <person name="Horn M."/>
        </authorList>
    </citation>
    <scope>NUCLEOTIDE SEQUENCE [LARGE SCALE GENOMIC DNA]</scope>
    <source>
        <strain>5a2</strain>
    </source>
</reference>
<proteinExistence type="inferred from homology"/>
<feature type="chain" id="PRO_1000089148" description="Endoribonuclease YbeY">
    <location>
        <begin position="1"/>
        <end position="147"/>
    </location>
</feature>
<feature type="binding site" evidence="1">
    <location>
        <position position="111"/>
    </location>
    <ligand>
        <name>Zn(2+)</name>
        <dbReference type="ChEBI" id="CHEBI:29105"/>
        <note>catalytic</note>
    </ligand>
</feature>
<feature type="binding site" evidence="1">
    <location>
        <position position="115"/>
    </location>
    <ligand>
        <name>Zn(2+)</name>
        <dbReference type="ChEBI" id="CHEBI:29105"/>
        <note>catalytic</note>
    </ligand>
</feature>
<feature type="binding site" evidence="1">
    <location>
        <position position="121"/>
    </location>
    <ligand>
        <name>Zn(2+)</name>
        <dbReference type="ChEBI" id="CHEBI:29105"/>
        <note>catalytic</note>
    </ligand>
</feature>
<protein>
    <recommendedName>
        <fullName evidence="1">Endoribonuclease YbeY</fullName>
        <ecNumber evidence="1">3.1.-.-</ecNumber>
    </recommendedName>
</protein>
<sequence length="147" mass="17579">MPKANIYYFVEDIQFKLPNPKIITDWIHNVIQQENCQLVNLNFIFCSDNFLHKKNLKYLQHDTLTDVITFSYAEDQKNIEGEIYISIERVSDNATTYQIDFWQELYTVMIHGVLHLLGYNDETLLEQEEMRKKESIYMLANRIVNLH</sequence>
<accession>B3ER68</accession>
<name>YBEY_AMOA5</name>